<dbReference type="EMBL" id="AM039952">
    <property type="protein sequence ID" value="CAJ22534.1"/>
    <property type="molecule type" value="Genomic_DNA"/>
</dbReference>
<dbReference type="SMR" id="Q3BX79"/>
<dbReference type="STRING" id="456327.BJD11_18275"/>
<dbReference type="KEGG" id="xcv:XCV0903"/>
<dbReference type="eggNOG" id="COG1452">
    <property type="taxonomic scope" value="Bacteria"/>
</dbReference>
<dbReference type="HOGENOM" id="CLU_009039_0_0_6"/>
<dbReference type="Proteomes" id="UP000007069">
    <property type="component" value="Chromosome"/>
</dbReference>
<dbReference type="GO" id="GO:0009279">
    <property type="term" value="C:cell outer membrane"/>
    <property type="evidence" value="ECO:0007669"/>
    <property type="project" value="UniProtKB-SubCell"/>
</dbReference>
<dbReference type="GO" id="GO:1990351">
    <property type="term" value="C:transporter complex"/>
    <property type="evidence" value="ECO:0007669"/>
    <property type="project" value="TreeGrafter"/>
</dbReference>
<dbReference type="GO" id="GO:0043165">
    <property type="term" value="P:Gram-negative-bacterium-type cell outer membrane assembly"/>
    <property type="evidence" value="ECO:0007669"/>
    <property type="project" value="UniProtKB-UniRule"/>
</dbReference>
<dbReference type="GO" id="GO:0015920">
    <property type="term" value="P:lipopolysaccharide transport"/>
    <property type="evidence" value="ECO:0007669"/>
    <property type="project" value="InterPro"/>
</dbReference>
<dbReference type="Gene3D" id="2.60.450.10">
    <property type="entry name" value="Lipopolysaccharide (LPS) transport protein A like domain"/>
    <property type="match status" value="1"/>
</dbReference>
<dbReference type="HAMAP" id="MF_01411">
    <property type="entry name" value="LPS_assembly_LptD"/>
    <property type="match status" value="1"/>
</dbReference>
<dbReference type="InterPro" id="IPR020889">
    <property type="entry name" value="LipoPS_assembly_LptD"/>
</dbReference>
<dbReference type="InterPro" id="IPR050218">
    <property type="entry name" value="LptD"/>
</dbReference>
<dbReference type="InterPro" id="IPR007543">
    <property type="entry name" value="LptD_C"/>
</dbReference>
<dbReference type="InterPro" id="IPR005653">
    <property type="entry name" value="OstA-like_N"/>
</dbReference>
<dbReference type="NCBIfam" id="NF003358">
    <property type="entry name" value="PRK04423.1"/>
    <property type="match status" value="1"/>
</dbReference>
<dbReference type="PANTHER" id="PTHR30189">
    <property type="entry name" value="LPS-ASSEMBLY PROTEIN"/>
    <property type="match status" value="1"/>
</dbReference>
<dbReference type="PANTHER" id="PTHR30189:SF1">
    <property type="entry name" value="LPS-ASSEMBLY PROTEIN LPTD"/>
    <property type="match status" value="1"/>
</dbReference>
<dbReference type="Pfam" id="PF04453">
    <property type="entry name" value="LptD"/>
    <property type="match status" value="1"/>
</dbReference>
<dbReference type="Pfam" id="PF03968">
    <property type="entry name" value="LptD_N"/>
    <property type="match status" value="1"/>
</dbReference>
<name>LPTD_XANE5</name>
<reference key="1">
    <citation type="journal article" date="2005" name="J. Bacteriol.">
        <title>Insights into genome plasticity and pathogenicity of the plant pathogenic Bacterium Xanthomonas campestris pv. vesicatoria revealed by the complete genome sequence.</title>
        <authorList>
            <person name="Thieme F."/>
            <person name="Koebnik R."/>
            <person name="Bekel T."/>
            <person name="Berger C."/>
            <person name="Boch J."/>
            <person name="Buettner D."/>
            <person name="Caldana C."/>
            <person name="Gaigalat L."/>
            <person name="Goesmann A."/>
            <person name="Kay S."/>
            <person name="Kirchner O."/>
            <person name="Lanz C."/>
            <person name="Linke B."/>
            <person name="McHardy A.C."/>
            <person name="Meyer F."/>
            <person name="Mittenhuber G."/>
            <person name="Nies D.H."/>
            <person name="Niesbach-Kloesgen U."/>
            <person name="Patschkowski T."/>
            <person name="Rueckert C."/>
            <person name="Rupp O."/>
            <person name="Schneiker S."/>
            <person name="Schuster S.C."/>
            <person name="Vorhoelter F.J."/>
            <person name="Weber E."/>
            <person name="Puehler A."/>
            <person name="Bonas U."/>
            <person name="Bartels D."/>
            <person name="Kaiser O."/>
        </authorList>
    </citation>
    <scope>NUCLEOTIDE SEQUENCE [LARGE SCALE GENOMIC DNA]</scope>
    <source>
        <strain>85-10</strain>
    </source>
</reference>
<sequence length="809" mass="91833">MRRALRLLPLPLSIAICLPAMAADKPLNWGLCPAVDPLPGFDGAPAADPKAAEMRQQLPTDIEGDQLSGTSTTPQYQGNVALKRGDQFLGADNLRMDTETGNYIAEGNVRYQDTSFRMVADRAEGNQDTDTHKVTNIQYQLVERRGNGDAESVDLQGQVGQMHRSTYTTCDPSQPIWRVRAPEIDVDNEEGFGTARNAVLQIGKVPVLYFPWFKFPIDDRRQTGLLFPQFGLSGRNGFDYLQPIYLNLAPNYDATLLPRYMSKRGFMFGTEFRYLYEGGRGEVTGNYLPNDKLRDKDRGSVFYSGYHNVNSNWQARSSISWVSDTRYVEDFTSRINGMGSASSLQSTVGIYGTGETWTAGLMADRWQLTDYTLDEQALPYNRQPRAYFTWEKPLGIFEAGIYAEAVRFTHDDSYFVRPPISGSSRDDNEDEYVRTNIRNKQYGSGARLDVKPYISMPLSGAAWFLTPTVAWRYTAYQLDSTLADTAPLTGNRTPTRSLPIASLDAGLYFDRETSLFGTNYLNTLEPRMYYLYVPYRDQDDLPVFDTRPFTFSYGQLFRDTRYTGADRQNDANQLTLAVTSRWLRQDDGREKLSLSAGQILYFSDSLVTINNSNNSAAGSEQTVEQGKSAWVADANYMINDRWSMGATYQWNPNSRKEDLASLRTRYLLNNDGIINLAYRYRRNLTDNSDQLKQADFSFLYPINPSWSAVGRYYYSLLDRKPLEIIGGVQWDSCCLAVRGLVRRFVRNRDGEMDNSIQIEFVLKGLSSFGQNTDRTLRRAILGYYRDDLYLVPPSNTTTNPDDYDPNLIP</sequence>
<protein>
    <recommendedName>
        <fullName evidence="1">LPS-assembly protein LptD</fullName>
    </recommendedName>
</protein>
<organism>
    <name type="scientific">Xanthomonas euvesicatoria pv. vesicatoria (strain 85-10)</name>
    <name type="common">Xanthomonas campestris pv. vesicatoria</name>
    <dbReference type="NCBI Taxonomy" id="316273"/>
    <lineage>
        <taxon>Bacteria</taxon>
        <taxon>Pseudomonadati</taxon>
        <taxon>Pseudomonadota</taxon>
        <taxon>Gammaproteobacteria</taxon>
        <taxon>Lysobacterales</taxon>
        <taxon>Lysobacteraceae</taxon>
        <taxon>Xanthomonas</taxon>
    </lineage>
</organism>
<comment type="function">
    <text evidence="1">Together with LptE, is involved in the assembly of lipopolysaccharide (LPS) at the surface of the outer membrane.</text>
</comment>
<comment type="subunit">
    <text evidence="1">Component of the lipopolysaccharide transport and assembly complex. Interacts with LptE and LptA.</text>
</comment>
<comment type="subcellular location">
    <subcellularLocation>
        <location evidence="1">Cell outer membrane</location>
    </subcellularLocation>
</comment>
<comment type="similarity">
    <text evidence="1">Belongs to the LptD family.</text>
</comment>
<accession>Q3BX79</accession>
<evidence type="ECO:0000255" key="1">
    <source>
        <dbReference type="HAMAP-Rule" id="MF_01411"/>
    </source>
</evidence>
<gene>
    <name evidence="1" type="primary">lptD</name>
    <name type="synonym">imp</name>
    <name type="synonym">ostA</name>
    <name type="ordered locus">XCV0903</name>
</gene>
<feature type="signal peptide" evidence="1">
    <location>
        <begin position="1"/>
        <end position="22"/>
    </location>
</feature>
<feature type="chain" id="PRO_5000075439" description="LPS-assembly protein LptD">
    <location>
        <begin position="23"/>
        <end position="809"/>
    </location>
</feature>
<keyword id="KW-0998">Cell outer membrane</keyword>
<keyword id="KW-0472">Membrane</keyword>
<keyword id="KW-0732">Signal</keyword>
<proteinExistence type="inferred from homology"/>